<accession>P11557</accession>
<accession>P76687</accession>
<accession>Q2M753</accession>
<proteinExistence type="evidence at protein level"/>
<dbReference type="EMBL" id="X15162">
    <property type="protein sequence ID" value="CAA33253.1"/>
    <property type="molecule type" value="Genomic_DNA"/>
</dbReference>
<dbReference type="EMBL" id="Z19601">
    <property type="protein sequence ID" value="CAA79667.1"/>
    <property type="molecule type" value="Genomic_DNA"/>
</dbReference>
<dbReference type="EMBL" id="U18997">
    <property type="protein sequence ID" value="AAA58185.1"/>
    <property type="molecule type" value="Genomic_DNA"/>
</dbReference>
<dbReference type="EMBL" id="U00096">
    <property type="protein sequence ID" value="AAC76413.1"/>
    <property type="molecule type" value="Genomic_DNA"/>
</dbReference>
<dbReference type="EMBL" id="AP009048">
    <property type="protein sequence ID" value="BAE77903.1"/>
    <property type="molecule type" value="Genomic_DNA"/>
</dbReference>
<dbReference type="PIR" id="G65133">
    <property type="entry name" value="Q4ECAD"/>
</dbReference>
<dbReference type="RefSeq" id="NP_417847.1">
    <property type="nucleotide sequence ID" value="NC_000913.3"/>
</dbReference>
<dbReference type="RefSeq" id="WP_000343215.1">
    <property type="nucleotide sequence ID" value="NZ_SSZK01000008.1"/>
</dbReference>
<dbReference type="PDB" id="2LFV">
    <property type="method" value="NMR"/>
    <property type="chains" value="A=338-428"/>
</dbReference>
<dbReference type="PDBsum" id="2LFV"/>
<dbReference type="BMRB" id="P11557"/>
<dbReference type="SMR" id="P11557"/>
<dbReference type="BioGRID" id="4262961">
    <property type="interactions" value="617"/>
</dbReference>
<dbReference type="DIP" id="DIP-9397N"/>
<dbReference type="FunCoup" id="P11557">
    <property type="interactions" value="53"/>
</dbReference>
<dbReference type="IntAct" id="P11557">
    <property type="interactions" value="22"/>
</dbReference>
<dbReference type="STRING" id="511145.b3388"/>
<dbReference type="jPOST" id="P11557"/>
<dbReference type="PaxDb" id="511145-b3388"/>
<dbReference type="EnsemblBacteria" id="AAC76413">
    <property type="protein sequence ID" value="AAC76413"/>
    <property type="gene ID" value="b3388"/>
</dbReference>
<dbReference type="GeneID" id="947930"/>
<dbReference type="KEGG" id="ecj:JW3351"/>
<dbReference type="KEGG" id="eco:b3388"/>
<dbReference type="KEGG" id="ecoc:C3026_18385"/>
<dbReference type="PATRIC" id="fig|1411691.4.peg.3342"/>
<dbReference type="EchoBASE" id="EB1170"/>
<dbReference type="eggNOG" id="COG3266">
    <property type="taxonomic scope" value="Bacteria"/>
</dbReference>
<dbReference type="HOGENOM" id="CLU_048276_1_0_6"/>
<dbReference type="InParanoid" id="P11557"/>
<dbReference type="OMA" id="SRQYIMM"/>
<dbReference type="OrthoDB" id="6189127at2"/>
<dbReference type="PhylomeDB" id="P11557"/>
<dbReference type="BioCyc" id="EcoCyc:EG11183-MONOMER"/>
<dbReference type="EvolutionaryTrace" id="P11557"/>
<dbReference type="PHI-base" id="PHI:6729"/>
<dbReference type="PRO" id="PR:P11557"/>
<dbReference type="Proteomes" id="UP000000625">
    <property type="component" value="Chromosome"/>
</dbReference>
<dbReference type="GO" id="GO:0032153">
    <property type="term" value="C:cell division site"/>
    <property type="evidence" value="ECO:0000314"/>
    <property type="project" value="EcoCyc"/>
</dbReference>
<dbReference type="GO" id="GO:0030428">
    <property type="term" value="C:cell septum"/>
    <property type="evidence" value="ECO:0000314"/>
    <property type="project" value="EcoCyc"/>
</dbReference>
<dbReference type="GO" id="GO:0005886">
    <property type="term" value="C:plasma membrane"/>
    <property type="evidence" value="ECO:0007669"/>
    <property type="project" value="UniProtKB-SubCell"/>
</dbReference>
<dbReference type="GO" id="GO:0008047">
    <property type="term" value="F:enzyme activator activity"/>
    <property type="evidence" value="ECO:0000314"/>
    <property type="project" value="EcoCyc"/>
</dbReference>
<dbReference type="GO" id="GO:0042834">
    <property type="term" value="F:peptidoglycan binding"/>
    <property type="evidence" value="ECO:0000314"/>
    <property type="project" value="EcoCyc"/>
</dbReference>
<dbReference type="GO" id="GO:0032506">
    <property type="term" value="P:cytokinetic process"/>
    <property type="evidence" value="ECO:0007669"/>
    <property type="project" value="InterPro"/>
</dbReference>
<dbReference type="FunFam" id="3.30.70.1070:FF:000004">
    <property type="entry name" value="Cell division protein DamX"/>
    <property type="match status" value="1"/>
</dbReference>
<dbReference type="Gene3D" id="3.30.70.1070">
    <property type="entry name" value="Sporulation related repeat"/>
    <property type="match status" value="1"/>
</dbReference>
<dbReference type="HAMAP" id="MF_02021">
    <property type="entry name" value="DamX"/>
    <property type="match status" value="1"/>
</dbReference>
<dbReference type="InterPro" id="IPR032899">
    <property type="entry name" value="DamX"/>
</dbReference>
<dbReference type="InterPro" id="IPR007730">
    <property type="entry name" value="SPOR-like_dom"/>
</dbReference>
<dbReference type="InterPro" id="IPR036680">
    <property type="entry name" value="SPOR-like_sf"/>
</dbReference>
<dbReference type="InterPro" id="IPR053361">
    <property type="entry name" value="Vulval_dev_neg_regulator"/>
</dbReference>
<dbReference type="NCBIfam" id="NF008153">
    <property type="entry name" value="PRK10905.1"/>
    <property type="match status" value="1"/>
</dbReference>
<dbReference type="PANTHER" id="PTHR48233:SF5">
    <property type="entry name" value="BRINKER"/>
    <property type="match status" value="1"/>
</dbReference>
<dbReference type="PANTHER" id="PTHR48233">
    <property type="entry name" value="MUCIN 4B, ISOFORM B-RELATED"/>
    <property type="match status" value="1"/>
</dbReference>
<dbReference type="Pfam" id="PF05036">
    <property type="entry name" value="SPOR"/>
    <property type="match status" value="1"/>
</dbReference>
<dbReference type="SUPFAM" id="SSF110997">
    <property type="entry name" value="Sporulation related repeat"/>
    <property type="match status" value="1"/>
</dbReference>
<dbReference type="PROSITE" id="PS51724">
    <property type="entry name" value="SPOR"/>
    <property type="match status" value="1"/>
</dbReference>
<sequence length="428" mass="46162">MDEFKPEDELKPDPSDRRTGRSRQSSERSERTERGEPQINFDDIELDDTDDRRPTRAQKERNEEPEIEEEIDESEDETVDEERVERRPRKRKKAASKPASRQYMMMGVGILVLLLLIIGIGSALKAPSTTSSDQTASGEKSIDLAGNATDQANGVQPAPGTTSAENTQQDVSLPPISSTPTQGQTPVATDGQQRVEVQGDLNNALTQPQNQQQLNNVAVNSTLPTEPATVAPVRNGNASRDTAKTQTAERPSTTRPARQQAVIEPKKPQATVKTEPKPVAQTPKRTEPAAPVASTKAPAATSTPAPKETATTAPVQTASPAQTTATPAAGAKTAGNVGSLKSAPSSHYTLQLSSSSNYDNLNGWAKKENLKNYVVYETTRNGQPWYVLVSGVYASKEEAKKAVSTLPADVQAKNPWAKPLRQVQADLK</sequence>
<reference key="1">
    <citation type="journal article" date="1989" name="Mol. Gen. Genet.">
        <title>The Escherichia coli dam gene is expressed as a distal gene of a new operon.</title>
        <authorList>
            <person name="Jonczyk P."/>
            <person name="Hines R."/>
            <person name="Smith D.W."/>
        </authorList>
    </citation>
    <scope>NUCLEOTIDE SEQUENCE [GENOMIC DNA]</scope>
    <source>
        <strain>K12</strain>
    </source>
</reference>
<reference key="2">
    <citation type="journal article" date="1995" name="Mol. Gen. Genet.">
        <title>Characterization of three genes in the dam-containing operon of Escherichia coli.</title>
        <authorList>
            <person name="Lyngstadaas A."/>
            <person name="Lobner-Olesen A."/>
            <person name="Boye E."/>
        </authorList>
    </citation>
    <scope>NUCLEOTIDE SEQUENCE [GENOMIC DNA]</scope>
    <scope>OVEREXPRESSION</scope>
</reference>
<reference key="3">
    <citation type="journal article" date="1997" name="Science">
        <title>The complete genome sequence of Escherichia coli K-12.</title>
        <authorList>
            <person name="Blattner F.R."/>
            <person name="Plunkett G. III"/>
            <person name="Bloch C.A."/>
            <person name="Perna N.T."/>
            <person name="Burland V."/>
            <person name="Riley M."/>
            <person name="Collado-Vides J."/>
            <person name="Glasner J.D."/>
            <person name="Rode C.K."/>
            <person name="Mayhew G.F."/>
            <person name="Gregor J."/>
            <person name="Davis N.W."/>
            <person name="Kirkpatrick H.A."/>
            <person name="Goeden M.A."/>
            <person name="Rose D.J."/>
            <person name="Mau B."/>
            <person name="Shao Y."/>
        </authorList>
    </citation>
    <scope>NUCLEOTIDE SEQUENCE [LARGE SCALE GENOMIC DNA]</scope>
    <source>
        <strain>K12 / MG1655 / ATCC 47076</strain>
    </source>
</reference>
<reference key="4">
    <citation type="journal article" date="2006" name="Mol. Syst. Biol.">
        <title>Highly accurate genome sequences of Escherichia coli K-12 strains MG1655 and W3110.</title>
        <authorList>
            <person name="Hayashi K."/>
            <person name="Morooka N."/>
            <person name="Yamamoto Y."/>
            <person name="Fujita K."/>
            <person name="Isono K."/>
            <person name="Choi S."/>
            <person name="Ohtsubo E."/>
            <person name="Baba T."/>
            <person name="Wanner B.L."/>
            <person name="Mori H."/>
            <person name="Horiuchi T."/>
        </authorList>
    </citation>
    <scope>NUCLEOTIDE SEQUENCE [LARGE SCALE GENOMIC DNA]</scope>
    <source>
        <strain>K12 / W3110 / ATCC 27325 / DSM 5911</strain>
    </source>
</reference>
<reference key="5">
    <citation type="journal article" date="2009" name="J. Bacteriol.">
        <title>Self-enhanced accumulation of FtsN at division sites and roles for other proteins with a SPOR domain (DamX, DedD, and RlpA) in Escherichia coli cell constriction.</title>
        <authorList>
            <person name="Gerding M.A."/>
            <person name="Liu B."/>
            <person name="Bendezu F.O."/>
            <person name="Hale C.A."/>
            <person name="Bernhardt T.G."/>
            <person name="de Boer P.A."/>
        </authorList>
    </citation>
    <scope>FUNCTION</scope>
    <scope>SUBCELLULAR LOCATION</scope>
    <scope>DISRUPTION PHENOTYPE</scope>
    <source>
        <strain>K12 / MG1655 / ATCC 47076</strain>
    </source>
</reference>
<reference key="6">
    <citation type="journal article" date="2010" name="J. Bacteriol.">
        <title>Discovery and characterization of three new Escherichia coli septal ring proteins that contain a SPOR domain: DamX, DedD, and RlpA.</title>
        <authorList>
            <person name="Arends S.J."/>
            <person name="Williams K."/>
            <person name="Scott R.J."/>
            <person name="Rolong S."/>
            <person name="Popham D.L."/>
            <person name="Weiss D.S."/>
        </authorList>
    </citation>
    <scope>FUNCTION</scope>
    <scope>INTERACTION WITH FTS PROTEINS</scope>
    <scope>SUBCELLULAR LOCATION</scope>
    <scope>DOMAIN</scope>
    <source>
        <strain>K12 / BW25113</strain>
    </source>
</reference>
<reference key="7">
    <citation type="journal article" date="2013" name="Biochemistry">
        <title>Nuclear magnetic resonance solution structure of the peptidoglycan-binding SPOR domain from Escherichia coli DamX: insights into septal localization.</title>
        <authorList>
            <person name="Williams K.B."/>
            <person name="Yahashiri A."/>
            <person name="Arends S.J."/>
            <person name="Popham D.L."/>
            <person name="Fowler C.A."/>
            <person name="Weiss D.S."/>
        </authorList>
    </citation>
    <scope>STRUCTURE BY NMR OF 338-428</scope>
    <scope>SUBCELLULAR LOCATION</scope>
    <scope>DOMAIN</scope>
    <scope>MUTAGENESIS OF GLN-351; SER-354 AND TRP-416</scope>
</reference>
<evidence type="ECO:0000255" key="1">
    <source>
        <dbReference type="HAMAP-Rule" id="MF_02021"/>
    </source>
</evidence>
<evidence type="ECO:0000256" key="2">
    <source>
        <dbReference type="SAM" id="MobiDB-lite"/>
    </source>
</evidence>
<evidence type="ECO:0000269" key="3">
    <source>
    </source>
</evidence>
<evidence type="ECO:0000269" key="4">
    <source>
    </source>
</evidence>
<evidence type="ECO:0000269" key="5">
    <source>
    </source>
</evidence>
<evidence type="ECO:0000269" key="6">
    <source>
    </source>
</evidence>
<evidence type="ECO:0000305" key="7"/>
<evidence type="ECO:0000305" key="8">
    <source>
    </source>
</evidence>
<evidence type="ECO:0007829" key="9">
    <source>
        <dbReference type="PDB" id="2LFV"/>
    </source>
</evidence>
<keyword id="KW-0002">3D-structure</keyword>
<keyword id="KW-0131">Cell cycle</keyword>
<keyword id="KW-0132">Cell division</keyword>
<keyword id="KW-0997">Cell inner membrane</keyword>
<keyword id="KW-1003">Cell membrane</keyword>
<keyword id="KW-0175">Coiled coil</keyword>
<keyword id="KW-0472">Membrane</keyword>
<keyword id="KW-1185">Reference proteome</keyword>
<keyword id="KW-0812">Transmembrane</keyword>
<keyword id="KW-1133">Transmembrane helix</keyword>
<name>DAMX_ECOLI</name>
<comment type="function">
    <text evidence="1 3 4">Non-essential cell division protein.</text>
</comment>
<comment type="subunit">
    <text evidence="4">Interacts in vitro with multiple Fts proteins, including FtsQ and FtsN.</text>
</comment>
<comment type="subcellular location">
    <subcellularLocation>
        <location evidence="7">Cell inner membrane</location>
        <topology evidence="1">Single-pass membrane protein</topology>
    </subcellularLocation>
    <text evidence="3 4 5">Localizes at the septal ring (PubMed:19684127, PubMed:19880599, PubMed:23290046). Recruitment to the septal ring requires FtsZ (PubMed:19880599).</text>
</comment>
<comment type="domain">
    <text evidence="1 4 5">The SPOR domain binds septal peptidoglycans and is required to target DamX to the septal ring.</text>
</comment>
<comment type="disruption phenotype">
    <text evidence="3">Deletion mutant shows no obvious phenotype, but absence of the protein aggravates the division defect in ftsN or dedD mutants.</text>
</comment>
<comment type="miscellaneous">
    <text evidence="6">Overexpression induces cell filamentation.</text>
</comment>
<comment type="similarity">
    <text evidence="1 7">Belongs to the DamX family.</text>
</comment>
<protein>
    <recommendedName>
        <fullName evidence="1 7">Cell division protein DamX</fullName>
    </recommendedName>
</protein>
<gene>
    <name evidence="1" type="primary">damX</name>
    <name type="synonym">yhfB</name>
    <name type="ordered locus">b3388</name>
    <name type="ordered locus">JW3351</name>
</gene>
<organism>
    <name type="scientific">Escherichia coli (strain K12)</name>
    <dbReference type="NCBI Taxonomy" id="83333"/>
    <lineage>
        <taxon>Bacteria</taxon>
        <taxon>Pseudomonadati</taxon>
        <taxon>Pseudomonadota</taxon>
        <taxon>Gammaproteobacteria</taxon>
        <taxon>Enterobacterales</taxon>
        <taxon>Enterobacteriaceae</taxon>
        <taxon>Escherichia</taxon>
    </lineage>
</organism>
<feature type="chain" id="PRO_0000079779" description="Cell division protein DamX">
    <location>
        <begin position="1"/>
        <end position="428"/>
    </location>
</feature>
<feature type="topological domain" description="Cytoplasmic" evidence="8">
    <location>
        <begin position="1"/>
        <end position="103"/>
    </location>
</feature>
<feature type="transmembrane region" description="Helical" evidence="1">
    <location>
        <begin position="104"/>
        <end position="124"/>
    </location>
</feature>
<feature type="topological domain" description="Periplasmic" evidence="8">
    <location>
        <begin position="125"/>
        <end position="428"/>
    </location>
</feature>
<feature type="domain" description="SPOR" evidence="1">
    <location>
        <begin position="342"/>
        <end position="419"/>
    </location>
</feature>
<feature type="region of interest" description="Disordered" evidence="2">
    <location>
        <begin position="1"/>
        <end position="99"/>
    </location>
</feature>
<feature type="region of interest" description="Disordered" evidence="2">
    <location>
        <begin position="149"/>
        <end position="190"/>
    </location>
</feature>
<feature type="region of interest" description="Disordered" evidence="2">
    <location>
        <begin position="226"/>
        <end position="344"/>
    </location>
</feature>
<feature type="coiled-coil region" evidence="1">
    <location>
        <begin position="55"/>
        <end position="87"/>
    </location>
</feature>
<feature type="compositionally biased region" description="Basic and acidic residues" evidence="2">
    <location>
        <begin position="7"/>
        <end position="36"/>
    </location>
</feature>
<feature type="compositionally biased region" description="Basic and acidic residues" evidence="2">
    <location>
        <begin position="50"/>
        <end position="64"/>
    </location>
</feature>
<feature type="compositionally biased region" description="Acidic residues" evidence="2">
    <location>
        <begin position="65"/>
        <end position="82"/>
    </location>
</feature>
<feature type="compositionally biased region" description="Basic residues" evidence="2">
    <location>
        <begin position="86"/>
        <end position="95"/>
    </location>
</feature>
<feature type="compositionally biased region" description="Polar residues" evidence="2">
    <location>
        <begin position="236"/>
        <end position="257"/>
    </location>
</feature>
<feature type="compositionally biased region" description="Low complexity" evidence="2">
    <location>
        <begin position="288"/>
        <end position="334"/>
    </location>
</feature>
<feature type="mutagenesis site" description="Eliminates septal localization." evidence="5">
    <original>Q</original>
    <variation>K</variation>
    <location>
        <position position="351"/>
    </location>
</feature>
<feature type="mutagenesis site" description="Impairs septal localization." evidence="5">
    <original>S</original>
    <variation>K</variation>
    <location>
        <position position="354"/>
    </location>
</feature>
<feature type="mutagenesis site" description="Impairs septal localization." evidence="5">
    <original>W</original>
    <variation>L</variation>
    <location>
        <position position="416"/>
    </location>
</feature>
<feature type="sequence conflict" description="In Ref. 1; CAA33253 and 2; CAA79667." evidence="7" ref="1 2">
    <original>P</original>
    <variation>T</variation>
    <location>
        <position position="6"/>
    </location>
</feature>
<feature type="sequence conflict" description="In Ref. 1; CAA33253 and 2; CAA79667." evidence="7" ref="1 2">
    <original>R</original>
    <variation>P</variation>
    <location>
        <position position="31"/>
    </location>
</feature>
<feature type="sequence conflict" description="In Ref. 1; CAA33253 and 2; CAA79667." evidence="7" ref="1 2">
    <original>RRPRKR</original>
    <variation>LVRVS</variation>
    <location>
        <begin position="86"/>
        <end position="91"/>
    </location>
</feature>
<feature type="sequence conflict" description="In Ref. 2; CAA79667." evidence="7" ref="2">
    <original>V</original>
    <variation>L</variation>
    <location>
        <position position="233"/>
    </location>
</feature>
<feature type="sequence conflict" description="In Ref. 1; CAA33253 and 2; CAA79667." evidence="7" ref="1 2">
    <original>A</original>
    <variation>V</variation>
    <location>
        <position position="310"/>
    </location>
</feature>
<feature type="sequence conflict" description="In Ref. 2; CAA79667." evidence="7" ref="2">
    <original>K</original>
    <variation>N</variation>
    <location>
        <position position="366"/>
    </location>
</feature>
<feature type="sequence conflict" description="In Ref. 1; CAA33253 and 2; CAA79667." evidence="7" ref="1 2">
    <original>G</original>
    <variation>V</variation>
    <location>
        <position position="382"/>
    </location>
</feature>
<feature type="helix" evidence="9">
    <location>
        <begin position="358"/>
        <end position="367"/>
    </location>
</feature>
<feature type="strand" evidence="9">
    <location>
        <begin position="380"/>
        <end position="383"/>
    </location>
</feature>
<feature type="strand" evidence="9">
    <location>
        <begin position="393"/>
        <end position="395"/>
    </location>
</feature>
<feature type="helix" evidence="9">
    <location>
        <begin position="396"/>
        <end position="405"/>
    </location>
</feature>
<feature type="helix" evidence="9">
    <location>
        <begin position="408"/>
        <end position="411"/>
    </location>
</feature>
<feature type="turn" evidence="9">
    <location>
        <begin position="420"/>
        <end position="422"/>
    </location>
</feature>
<feature type="helix" evidence="9">
    <location>
        <begin position="423"/>
        <end position="425"/>
    </location>
</feature>